<proteinExistence type="inferred from homology"/>
<comment type="function">
    <text evidence="1">Allows the formation of correctly charged Asn-tRNA(Asn) or Gln-tRNA(Gln) through the transamidation of misacylated Asp-tRNA(Asn) or Glu-tRNA(Gln) in organisms which lack either or both of asparaginyl-tRNA or glutaminyl-tRNA synthetases. The reaction takes place in the presence of glutamine and ATP through an activated phospho-Asp-tRNA(Asn) or phospho-Glu-tRNA(Gln) (By similarity).</text>
</comment>
<comment type="catalytic activity">
    <reaction>
        <text>L-glutamyl-tRNA(Gln) + L-glutamine + ATP + H2O = L-glutaminyl-tRNA(Gln) + L-glutamate + ADP + phosphate + H(+)</text>
        <dbReference type="Rhea" id="RHEA:17521"/>
        <dbReference type="Rhea" id="RHEA-COMP:9681"/>
        <dbReference type="Rhea" id="RHEA-COMP:9684"/>
        <dbReference type="ChEBI" id="CHEBI:15377"/>
        <dbReference type="ChEBI" id="CHEBI:15378"/>
        <dbReference type="ChEBI" id="CHEBI:29985"/>
        <dbReference type="ChEBI" id="CHEBI:30616"/>
        <dbReference type="ChEBI" id="CHEBI:43474"/>
        <dbReference type="ChEBI" id="CHEBI:58359"/>
        <dbReference type="ChEBI" id="CHEBI:78520"/>
        <dbReference type="ChEBI" id="CHEBI:78521"/>
        <dbReference type="ChEBI" id="CHEBI:456216"/>
    </reaction>
</comment>
<comment type="catalytic activity">
    <reaction>
        <text>L-aspartyl-tRNA(Asn) + L-glutamine + ATP + H2O = L-asparaginyl-tRNA(Asn) + L-glutamate + ADP + phosphate + 2 H(+)</text>
        <dbReference type="Rhea" id="RHEA:14513"/>
        <dbReference type="Rhea" id="RHEA-COMP:9674"/>
        <dbReference type="Rhea" id="RHEA-COMP:9677"/>
        <dbReference type="ChEBI" id="CHEBI:15377"/>
        <dbReference type="ChEBI" id="CHEBI:15378"/>
        <dbReference type="ChEBI" id="CHEBI:29985"/>
        <dbReference type="ChEBI" id="CHEBI:30616"/>
        <dbReference type="ChEBI" id="CHEBI:43474"/>
        <dbReference type="ChEBI" id="CHEBI:58359"/>
        <dbReference type="ChEBI" id="CHEBI:78515"/>
        <dbReference type="ChEBI" id="CHEBI:78516"/>
        <dbReference type="ChEBI" id="CHEBI:456216"/>
    </reaction>
</comment>
<comment type="subunit">
    <text evidence="1">Heterotrimer of A, B and C subunits.</text>
</comment>
<comment type="similarity">
    <text evidence="2">Belongs to the GatB/GatE family. GatB subfamily.</text>
</comment>
<accession>Q9ZLH6</accession>
<gene>
    <name type="primary">gatB</name>
    <name type="ordered locus">jhp_0603</name>
</gene>
<protein>
    <recommendedName>
        <fullName>Aspartyl/glutamyl-tRNA(Asn/Gln) amidotransferase subunit B</fullName>
        <shortName>Asp/Glu-ADT subunit B</shortName>
        <ecNumber>6.3.5.-</ecNumber>
    </recommendedName>
</protein>
<sequence length="474" mass="53102">MPFEAVIGLEVHVQLNTKTKIFCSCSTSFGETPNSNTCPVCLGLPGALPVLNKEVVKKAIQLGTAIEAHINQYSIFARKNYFYPDLPKAYQISQFEVPIVSDGKLEIDTKEGAKIVRIERAHMEEDAGKNIHEGSYSLVDLNRACTPLLEIVSKPDMKNSEEAIAYLKKLHAIVRFIGISDANMQEGNFRCDANVSIRPKGDEKLYTRVEIKNLNSFRFIAKAIEYEIERQSVAWENGRYNEEVVQETRLFDTAKGITLSMRNKEESADYRYFKDPDLYPVFIDEKLLKEAQKINELPGAKKIRYMKDFNLKEDDANLLVSDPLLAEYFESMLNLGVKAKTSVTWLCVELLGRLKAEVTLENCGISAHALGALAKRIDEGKISGKSAKDVLDRLLEEQGGDVDTLIEQMGLSQVNDTEAIVKVIEEVLKNNADKVLEYKSGKDKLFGFFVGQAMKNLKGANPSVVNAILKEKLD</sequence>
<evidence type="ECO:0000250" key="1"/>
<evidence type="ECO:0000305" key="2"/>
<reference key="1">
    <citation type="journal article" date="1999" name="Nature">
        <title>Genomic sequence comparison of two unrelated isolates of the human gastric pathogen Helicobacter pylori.</title>
        <authorList>
            <person name="Alm R.A."/>
            <person name="Ling L.-S.L."/>
            <person name="Moir D.T."/>
            <person name="King B.L."/>
            <person name="Brown E.D."/>
            <person name="Doig P.C."/>
            <person name="Smith D.R."/>
            <person name="Noonan B."/>
            <person name="Guild B.C."/>
            <person name="deJonge B.L."/>
            <person name="Carmel G."/>
            <person name="Tummino P.J."/>
            <person name="Caruso A."/>
            <person name="Uria-Nickelsen M."/>
            <person name="Mills D.M."/>
            <person name="Ives C."/>
            <person name="Gibson R."/>
            <person name="Merberg D."/>
            <person name="Mills S.D."/>
            <person name="Jiang Q."/>
            <person name="Taylor D.E."/>
            <person name="Vovis G.F."/>
            <person name="Trust T.J."/>
        </authorList>
    </citation>
    <scope>NUCLEOTIDE SEQUENCE [LARGE SCALE GENOMIC DNA]</scope>
    <source>
        <strain>J99 / ATCC 700824</strain>
    </source>
</reference>
<organism>
    <name type="scientific">Helicobacter pylori (strain J99 / ATCC 700824)</name>
    <name type="common">Campylobacter pylori J99</name>
    <dbReference type="NCBI Taxonomy" id="85963"/>
    <lineage>
        <taxon>Bacteria</taxon>
        <taxon>Pseudomonadati</taxon>
        <taxon>Campylobacterota</taxon>
        <taxon>Epsilonproteobacteria</taxon>
        <taxon>Campylobacterales</taxon>
        <taxon>Helicobacteraceae</taxon>
        <taxon>Helicobacter</taxon>
    </lineage>
</organism>
<feature type="chain" id="PRO_0000148795" description="Aspartyl/glutamyl-tRNA(Asn/Gln) amidotransferase subunit B">
    <location>
        <begin position="1"/>
        <end position="474"/>
    </location>
</feature>
<keyword id="KW-0067">ATP-binding</keyword>
<keyword id="KW-0436">Ligase</keyword>
<keyword id="KW-0547">Nucleotide-binding</keyword>
<keyword id="KW-0648">Protein biosynthesis</keyword>
<name>GATB_HELPJ</name>
<dbReference type="EC" id="6.3.5.-"/>
<dbReference type="EMBL" id="AE001439">
    <property type="protein sequence ID" value="AAD06184.1"/>
    <property type="molecule type" value="Genomic_DNA"/>
</dbReference>
<dbReference type="PIR" id="A71911">
    <property type="entry name" value="A71911"/>
</dbReference>
<dbReference type="RefSeq" id="WP_001115662.1">
    <property type="nucleotide sequence ID" value="NC_000921.1"/>
</dbReference>
<dbReference type="SMR" id="Q9ZLH6"/>
<dbReference type="KEGG" id="hpj:jhp_0603"/>
<dbReference type="PATRIC" id="fig|85963.30.peg.382"/>
<dbReference type="eggNOG" id="COG0064">
    <property type="taxonomic scope" value="Bacteria"/>
</dbReference>
<dbReference type="Proteomes" id="UP000000804">
    <property type="component" value="Chromosome"/>
</dbReference>
<dbReference type="GO" id="GO:0050566">
    <property type="term" value="F:asparaginyl-tRNA synthase (glutamine-hydrolyzing) activity"/>
    <property type="evidence" value="ECO:0007669"/>
    <property type="project" value="RHEA"/>
</dbReference>
<dbReference type="GO" id="GO:0005524">
    <property type="term" value="F:ATP binding"/>
    <property type="evidence" value="ECO:0007669"/>
    <property type="project" value="UniProtKB-KW"/>
</dbReference>
<dbReference type="GO" id="GO:0050567">
    <property type="term" value="F:glutaminyl-tRNA synthase (glutamine-hydrolyzing) activity"/>
    <property type="evidence" value="ECO:0007669"/>
    <property type="project" value="UniProtKB-UniRule"/>
</dbReference>
<dbReference type="GO" id="GO:0070681">
    <property type="term" value="P:glutaminyl-tRNAGln biosynthesis via transamidation"/>
    <property type="evidence" value="ECO:0007669"/>
    <property type="project" value="TreeGrafter"/>
</dbReference>
<dbReference type="GO" id="GO:0006412">
    <property type="term" value="P:translation"/>
    <property type="evidence" value="ECO:0007669"/>
    <property type="project" value="UniProtKB-UniRule"/>
</dbReference>
<dbReference type="FunFam" id="1.10.10.410:FF:000001">
    <property type="entry name" value="Aspartyl/glutamyl-tRNA(Asn/Gln) amidotransferase subunit B"/>
    <property type="match status" value="1"/>
</dbReference>
<dbReference type="Gene3D" id="1.10.10.410">
    <property type="match status" value="1"/>
</dbReference>
<dbReference type="Gene3D" id="1.10.150.380">
    <property type="entry name" value="GatB domain, N-terminal subdomain"/>
    <property type="match status" value="1"/>
</dbReference>
<dbReference type="HAMAP" id="MF_00121">
    <property type="entry name" value="GatB"/>
    <property type="match status" value="1"/>
</dbReference>
<dbReference type="InterPro" id="IPR017959">
    <property type="entry name" value="Asn/Gln-tRNA_amidoTrfase_suB/E"/>
</dbReference>
<dbReference type="InterPro" id="IPR006075">
    <property type="entry name" value="Asn/Gln-tRNA_Trfase_suB/E_cat"/>
</dbReference>
<dbReference type="InterPro" id="IPR018027">
    <property type="entry name" value="Asn/Gln_amidotransferase"/>
</dbReference>
<dbReference type="InterPro" id="IPR003789">
    <property type="entry name" value="Asn/Gln_tRNA_amidoTrase-B-like"/>
</dbReference>
<dbReference type="InterPro" id="IPR004413">
    <property type="entry name" value="GatB"/>
</dbReference>
<dbReference type="InterPro" id="IPR042114">
    <property type="entry name" value="GatB_C_1"/>
</dbReference>
<dbReference type="InterPro" id="IPR023168">
    <property type="entry name" value="GatB_Yqey_C_2"/>
</dbReference>
<dbReference type="InterPro" id="IPR017958">
    <property type="entry name" value="Gln-tRNA_amidoTrfase_suB_CS"/>
</dbReference>
<dbReference type="InterPro" id="IPR014746">
    <property type="entry name" value="Gln_synth/guanido_kin_cat_dom"/>
</dbReference>
<dbReference type="NCBIfam" id="TIGR00133">
    <property type="entry name" value="gatB"/>
    <property type="match status" value="1"/>
</dbReference>
<dbReference type="NCBIfam" id="NF004012">
    <property type="entry name" value="PRK05477.1-2"/>
    <property type="match status" value="1"/>
</dbReference>
<dbReference type="NCBIfam" id="NF004014">
    <property type="entry name" value="PRK05477.1-4"/>
    <property type="match status" value="1"/>
</dbReference>
<dbReference type="PANTHER" id="PTHR11659">
    <property type="entry name" value="GLUTAMYL-TRNA GLN AMIDOTRANSFERASE SUBUNIT B MITOCHONDRIAL AND PROKARYOTIC PET112-RELATED"/>
    <property type="match status" value="1"/>
</dbReference>
<dbReference type="PANTHER" id="PTHR11659:SF0">
    <property type="entry name" value="GLUTAMYL-TRNA(GLN) AMIDOTRANSFERASE SUBUNIT B, MITOCHONDRIAL"/>
    <property type="match status" value="1"/>
</dbReference>
<dbReference type="Pfam" id="PF02934">
    <property type="entry name" value="GatB_N"/>
    <property type="match status" value="1"/>
</dbReference>
<dbReference type="Pfam" id="PF02637">
    <property type="entry name" value="GatB_Yqey"/>
    <property type="match status" value="1"/>
</dbReference>
<dbReference type="SMART" id="SM00845">
    <property type="entry name" value="GatB_Yqey"/>
    <property type="match status" value="1"/>
</dbReference>
<dbReference type="SUPFAM" id="SSF89095">
    <property type="entry name" value="GatB/YqeY motif"/>
    <property type="match status" value="1"/>
</dbReference>
<dbReference type="SUPFAM" id="SSF55931">
    <property type="entry name" value="Glutamine synthetase/guanido kinase"/>
    <property type="match status" value="1"/>
</dbReference>
<dbReference type="PROSITE" id="PS01234">
    <property type="entry name" value="GATB"/>
    <property type="match status" value="1"/>
</dbReference>